<evidence type="ECO:0000250" key="1">
    <source>
        <dbReference type="UniProtKB" id="I6L8L6"/>
    </source>
</evidence>
<evidence type="ECO:0000250" key="2">
    <source>
        <dbReference type="UniProtKB" id="P24605"/>
    </source>
</evidence>
<evidence type="ECO:0000250" key="3">
    <source>
        <dbReference type="UniProtKB" id="Q90249"/>
    </source>
</evidence>
<evidence type="ECO:0000269" key="4">
    <source>
    </source>
</evidence>
<evidence type="ECO:0000303" key="5">
    <source>
    </source>
</evidence>
<evidence type="ECO:0000305" key="6"/>
<evidence type="ECO:0000305" key="7">
    <source>
    </source>
</evidence>
<organism>
    <name type="scientific">Trimeresurus stejnegeri</name>
    <name type="common">Chinese green tree viper</name>
    <name type="synonym">Viridovipera stejnegeri</name>
    <dbReference type="NCBI Taxonomy" id="39682"/>
    <lineage>
        <taxon>Eukaryota</taxon>
        <taxon>Metazoa</taxon>
        <taxon>Chordata</taxon>
        <taxon>Craniata</taxon>
        <taxon>Vertebrata</taxon>
        <taxon>Euteleostomi</taxon>
        <taxon>Lepidosauria</taxon>
        <taxon>Squamata</taxon>
        <taxon>Bifurcata</taxon>
        <taxon>Unidentata</taxon>
        <taxon>Episquamata</taxon>
        <taxon>Toxicofera</taxon>
        <taxon>Serpentes</taxon>
        <taxon>Colubroidea</taxon>
        <taxon>Viperidae</taxon>
        <taxon>Crotalinae</taxon>
        <taxon>Trimeresurus</taxon>
    </lineage>
</organism>
<comment type="function">
    <text evidence="1 4">Snake venom phospholipase A2 homolog that lacks catalytic activity (PubMed:12959640). It shows myotoxic and weak anticoagulant activities and induces local edema a few hours after injection (5-10 ug) in the hind paw (PubMed:12959640). A model of myotoxic mechanism has been proposed: an apo Lys49-PLA2 is activated by the entrance of a hydrophobic molecule (e.g. fatty acid) at the hydrophobic channel of the protein leading to a reorientation of a monomer (By similarity). This reorientation causes a transition between 'inactive' to 'active' states, causing alignment of C-terminal and membrane-docking sites (MDoS) side-by-side and putting the membrane-disruption sites (MDiS) in the same plane, exposed to solvent and in a symmetric position for both monomers (By similarity). The MDoS region stabilizes the toxin on membrane by the interaction of charged residues with phospholipid head groups (By similarity). Subsequently, the MDiS region destabilizes the membrane with penetration of hydrophobic residues (By similarity). This insertion causes a disorganization of the membrane, allowing an uncontrolled influx of ions (i.e. calcium and sodium), and eventually triggering irreversible intracellular alterations and cell death (By similarity).</text>
</comment>
<comment type="subcellular location">
    <subcellularLocation>
        <location evidence="4">Secreted</location>
    </subcellularLocation>
</comment>
<comment type="tissue specificity">
    <text evidence="7">Expressed by the venom gland.</text>
</comment>
<comment type="mass spectrometry" mass="13892.0" method="Electrospray" evidence="4"/>
<comment type="similarity">
    <text evidence="6">Belongs to the phospholipase A2 family. Group II subfamily. K49 sub-subfamily.</text>
</comment>
<comment type="caution">
    <text evidence="6">Does not bind calcium as one of the calcium-binding sites is lost (Asp-&gt;Lys in position 64, which corresponds to 'Lys-49' in the current nomenclature).</text>
</comment>
<comment type="caution">
    <text evidence="6">According to PubMed:12959640, T.stejnegeri was formerly named T.gramineus, supposing that this protein is the same as PLA-V from T.gramineus. They have been kept separated, because T.gramineus and T.stejnegeri are considered as being two different species (see http://reptile-database.org).</text>
</comment>
<keyword id="KW-1203">Blood coagulation cascade inhibiting toxin</keyword>
<keyword id="KW-0903">Direct protein sequencing</keyword>
<keyword id="KW-1015">Disulfide bond</keyword>
<keyword id="KW-1199">Hemostasis impairing toxin</keyword>
<keyword id="KW-0959">Myotoxin</keyword>
<keyword id="KW-0964">Secreted</keyword>
<keyword id="KW-0732">Signal</keyword>
<keyword id="KW-0800">Toxin</keyword>
<name>PA2HE_TRIST</name>
<dbReference type="EMBL" id="AY211935">
    <property type="protein sequence ID" value="AAP48893.1"/>
    <property type="molecule type" value="mRNA"/>
</dbReference>
<dbReference type="SMR" id="Q6H3D4"/>
<dbReference type="GO" id="GO:0005576">
    <property type="term" value="C:extracellular region"/>
    <property type="evidence" value="ECO:0007669"/>
    <property type="project" value="UniProtKB-SubCell"/>
</dbReference>
<dbReference type="GO" id="GO:0005509">
    <property type="term" value="F:calcium ion binding"/>
    <property type="evidence" value="ECO:0007669"/>
    <property type="project" value="InterPro"/>
</dbReference>
<dbReference type="GO" id="GO:0047498">
    <property type="term" value="F:calcium-dependent phospholipase A2 activity"/>
    <property type="evidence" value="ECO:0007669"/>
    <property type="project" value="TreeGrafter"/>
</dbReference>
<dbReference type="GO" id="GO:0005543">
    <property type="term" value="F:phospholipid binding"/>
    <property type="evidence" value="ECO:0007669"/>
    <property type="project" value="TreeGrafter"/>
</dbReference>
<dbReference type="GO" id="GO:0090729">
    <property type="term" value="F:toxin activity"/>
    <property type="evidence" value="ECO:0007669"/>
    <property type="project" value="UniProtKB-KW"/>
</dbReference>
<dbReference type="GO" id="GO:0050482">
    <property type="term" value="P:arachidonate secretion"/>
    <property type="evidence" value="ECO:0007669"/>
    <property type="project" value="InterPro"/>
</dbReference>
<dbReference type="GO" id="GO:0016042">
    <property type="term" value="P:lipid catabolic process"/>
    <property type="evidence" value="ECO:0007669"/>
    <property type="project" value="InterPro"/>
</dbReference>
<dbReference type="GO" id="GO:0042130">
    <property type="term" value="P:negative regulation of T cell proliferation"/>
    <property type="evidence" value="ECO:0007669"/>
    <property type="project" value="TreeGrafter"/>
</dbReference>
<dbReference type="GO" id="GO:0006644">
    <property type="term" value="P:phospholipid metabolic process"/>
    <property type="evidence" value="ECO:0007669"/>
    <property type="project" value="InterPro"/>
</dbReference>
<dbReference type="CDD" id="cd00125">
    <property type="entry name" value="PLA2c"/>
    <property type="match status" value="1"/>
</dbReference>
<dbReference type="FunFam" id="1.20.90.10:FF:000001">
    <property type="entry name" value="Basic phospholipase A2 homolog"/>
    <property type="match status" value="1"/>
</dbReference>
<dbReference type="Gene3D" id="1.20.90.10">
    <property type="entry name" value="Phospholipase A2 domain"/>
    <property type="match status" value="1"/>
</dbReference>
<dbReference type="InterPro" id="IPR001211">
    <property type="entry name" value="PLipase_A2"/>
</dbReference>
<dbReference type="InterPro" id="IPR033112">
    <property type="entry name" value="PLipase_A2_Asp_AS"/>
</dbReference>
<dbReference type="InterPro" id="IPR016090">
    <property type="entry name" value="PLipase_A2_dom"/>
</dbReference>
<dbReference type="InterPro" id="IPR036444">
    <property type="entry name" value="PLipase_A2_dom_sf"/>
</dbReference>
<dbReference type="InterPro" id="IPR033113">
    <property type="entry name" value="PLipase_A2_His_AS"/>
</dbReference>
<dbReference type="PANTHER" id="PTHR11716">
    <property type="entry name" value="PHOSPHOLIPASE A2 FAMILY MEMBER"/>
    <property type="match status" value="1"/>
</dbReference>
<dbReference type="PANTHER" id="PTHR11716:SF9">
    <property type="entry name" value="PHOSPHOLIPASE A2, MEMBRANE ASSOCIATED"/>
    <property type="match status" value="1"/>
</dbReference>
<dbReference type="Pfam" id="PF00068">
    <property type="entry name" value="Phospholip_A2_1"/>
    <property type="match status" value="1"/>
</dbReference>
<dbReference type="PRINTS" id="PR00389">
    <property type="entry name" value="PHPHLIPASEA2"/>
</dbReference>
<dbReference type="SMART" id="SM00085">
    <property type="entry name" value="PA2c"/>
    <property type="match status" value="1"/>
</dbReference>
<dbReference type="SUPFAM" id="SSF48619">
    <property type="entry name" value="Phospholipase A2, PLA2"/>
    <property type="match status" value="1"/>
</dbReference>
<dbReference type="PROSITE" id="PS00119">
    <property type="entry name" value="PA2_ASP"/>
    <property type="match status" value="1"/>
</dbReference>
<dbReference type="PROSITE" id="PS00118">
    <property type="entry name" value="PA2_HIS"/>
    <property type="match status" value="1"/>
</dbReference>
<feature type="signal peptide" evidence="4">
    <location>
        <begin position="1"/>
        <end position="16"/>
    </location>
</feature>
<feature type="chain" id="PRO_0000419078" description="Basic phospholipase A2 homolog Ts-K49a">
    <location>
        <begin position="17"/>
        <end position="138"/>
    </location>
</feature>
<feature type="region of interest" description="Important for membrane-damaging activities in eukaryotes and bacteria; heparin-binding" evidence="2">
    <location>
        <begin position="121"/>
        <end position="133"/>
    </location>
</feature>
<feature type="site" description="Important residue of the cationic membrane-docking site (MDoS)" evidence="1">
    <location>
        <position position="121"/>
    </location>
</feature>
<feature type="site" description="Important residue of the cationic membrane-docking site (MDoS)" evidence="1">
    <location>
        <position position="124"/>
    </location>
</feature>
<feature type="site" description="Hydrophobic membrane-disruption site (MDiS)" evidence="1">
    <location>
        <position position="127"/>
    </location>
</feature>
<feature type="site" description="Cationic membrane-docking site (MDoS)" evidence="1">
    <location>
        <position position="128"/>
    </location>
</feature>
<feature type="site" description="Hydrophobic membrane-disruption site (MDiS)" evidence="1">
    <location>
        <position position="130"/>
    </location>
</feature>
<feature type="site" description="Cationic membrane-docking site (MDoS)" evidence="1">
    <location>
        <position position="133"/>
    </location>
</feature>
<feature type="disulfide bond" evidence="3">
    <location>
        <begin position="42"/>
        <end position="131"/>
    </location>
</feature>
<feature type="disulfide bond" evidence="3">
    <location>
        <begin position="44"/>
        <end position="60"/>
    </location>
</feature>
<feature type="disulfide bond" evidence="3">
    <location>
        <begin position="59"/>
        <end position="111"/>
    </location>
</feature>
<feature type="disulfide bond" evidence="3">
    <location>
        <begin position="65"/>
        <end position="138"/>
    </location>
</feature>
<feature type="disulfide bond" evidence="3">
    <location>
        <begin position="66"/>
        <end position="104"/>
    </location>
</feature>
<feature type="disulfide bond" evidence="3">
    <location>
        <begin position="73"/>
        <end position="97"/>
    </location>
</feature>
<feature type="disulfide bond" evidence="3">
    <location>
        <begin position="91"/>
        <end position="102"/>
    </location>
</feature>
<protein>
    <recommendedName>
        <fullName evidence="5">Basic phospholipase A2 homolog Ts-K49a</fullName>
        <shortName>svPLA2 homolog</shortName>
    </recommendedName>
</protein>
<accession>Q6H3D4</accession>
<reference key="1">
    <citation type="journal article" date="2004" name="Biochem. J.">
        <title>Venom phospholipases A2 of bamboo viper (Trimeresurus stejnegeri): molecular characterization, geographic variations and evidence of multiple ancestries.</title>
        <authorList>
            <person name="Tsai I.-H."/>
            <person name="Wang Y.-M."/>
            <person name="Chen Y.-H."/>
            <person name="Tsai T.-S."/>
            <person name="Tu M.-C."/>
        </authorList>
    </citation>
    <scope>NUCLEOTIDE SEQUENCE [MRNA]</scope>
    <scope>PROTEIN SEQUENCE OF 17-39</scope>
    <scope>FUNCTION</scope>
    <scope>MASS SPECTROMETRY</scope>
    <scope>SUBCELLULAR LOCATION</scope>
    <source>
        <strain>Taiwan</strain>
        <tissue>Venom</tissue>
        <tissue>Venom gland</tissue>
    </source>
</reference>
<proteinExistence type="evidence at protein level"/>
<sequence length="138" mass="15690">MRTLWIMAVLLLGVEGSVIELGKMIFQETGKNPATSYGLYGCNCGPGGRRKPKDATDRCCYVHKCCYKKLTDCDPIKDRYSYSWVNKAIVCGEDNPCLKEMCECDKAVAICFRENLDTYDKKKKINLKLFCKKTSEQC</sequence>